<gene>
    <name evidence="1" type="primary">truA</name>
    <name type="ordered locus">TC_0748</name>
</gene>
<accession>Q9PJT0</accession>
<sequence length="267" mass="30413">MTKKIILRIAYQGTAYSGWQYQPNALSIQEVLETLLQKISRTRISVIASGRTDAGVHAQGQVAHFCCPDHPHFSDPGQIKKMLNALLPHDIVIRDVIATNEDFHSRFSAITKEYHYTLSLLPKPLPHHRLFCFSPRHKLCLESMREAAKYLVGTHDFASFANLGREYSSTVRTLYALDLLEQEHLVTVICKGNGFLYKMVRNIVGALLDIGKGKYPPEHLLEMLEKKDRKKGPPSAPPYGLSLHHVCYPSPYHWFCKHEHNSSNEEK</sequence>
<comment type="function">
    <text evidence="1">Formation of pseudouridine at positions 38, 39 and 40 in the anticodon stem and loop of transfer RNAs.</text>
</comment>
<comment type="catalytic activity">
    <reaction evidence="1">
        <text>uridine(38/39/40) in tRNA = pseudouridine(38/39/40) in tRNA</text>
        <dbReference type="Rhea" id="RHEA:22376"/>
        <dbReference type="Rhea" id="RHEA-COMP:10085"/>
        <dbReference type="Rhea" id="RHEA-COMP:10087"/>
        <dbReference type="ChEBI" id="CHEBI:65314"/>
        <dbReference type="ChEBI" id="CHEBI:65315"/>
        <dbReference type="EC" id="5.4.99.12"/>
    </reaction>
</comment>
<comment type="subunit">
    <text evidence="1">Homodimer.</text>
</comment>
<comment type="similarity">
    <text evidence="1">Belongs to the tRNA pseudouridine synthase TruA family.</text>
</comment>
<feature type="chain" id="PRO_0000057358" description="tRNA pseudouridine synthase A">
    <location>
        <begin position="1"/>
        <end position="267"/>
    </location>
</feature>
<feature type="active site" description="Nucleophile" evidence="1">
    <location>
        <position position="53"/>
    </location>
</feature>
<feature type="binding site" evidence="1">
    <location>
        <position position="114"/>
    </location>
    <ligand>
        <name>substrate</name>
    </ligand>
</feature>
<protein>
    <recommendedName>
        <fullName evidence="1">tRNA pseudouridine synthase A</fullName>
        <ecNumber evidence="1">5.4.99.12</ecNumber>
    </recommendedName>
    <alternativeName>
        <fullName evidence="1">tRNA pseudouridine(38-40) synthase</fullName>
    </alternativeName>
    <alternativeName>
        <fullName evidence="1">tRNA pseudouridylate synthase I</fullName>
    </alternativeName>
    <alternativeName>
        <fullName evidence="1">tRNA-uridine isomerase I</fullName>
    </alternativeName>
</protein>
<organism>
    <name type="scientific">Chlamydia muridarum (strain MoPn / Nigg)</name>
    <dbReference type="NCBI Taxonomy" id="243161"/>
    <lineage>
        <taxon>Bacteria</taxon>
        <taxon>Pseudomonadati</taxon>
        <taxon>Chlamydiota</taxon>
        <taxon>Chlamydiia</taxon>
        <taxon>Chlamydiales</taxon>
        <taxon>Chlamydiaceae</taxon>
        <taxon>Chlamydia/Chlamydophila group</taxon>
        <taxon>Chlamydia</taxon>
    </lineage>
</organism>
<name>TRUA_CHLMU</name>
<reference key="1">
    <citation type="journal article" date="2000" name="Nucleic Acids Res.">
        <title>Genome sequences of Chlamydia trachomatis MoPn and Chlamydia pneumoniae AR39.</title>
        <authorList>
            <person name="Read T.D."/>
            <person name="Brunham R.C."/>
            <person name="Shen C."/>
            <person name="Gill S.R."/>
            <person name="Heidelberg J.F."/>
            <person name="White O."/>
            <person name="Hickey E.K."/>
            <person name="Peterson J.D."/>
            <person name="Utterback T.R."/>
            <person name="Berry K.J."/>
            <person name="Bass S."/>
            <person name="Linher K.D."/>
            <person name="Weidman J.F."/>
            <person name="Khouri H.M."/>
            <person name="Craven B."/>
            <person name="Bowman C."/>
            <person name="Dodson R.J."/>
            <person name="Gwinn M.L."/>
            <person name="Nelson W.C."/>
            <person name="DeBoy R.T."/>
            <person name="Kolonay J.F."/>
            <person name="McClarty G."/>
            <person name="Salzberg S.L."/>
            <person name="Eisen J.A."/>
            <person name="Fraser C.M."/>
        </authorList>
    </citation>
    <scope>NUCLEOTIDE SEQUENCE [LARGE SCALE GENOMIC DNA]</scope>
    <source>
        <strain>MoPn / Nigg</strain>
    </source>
</reference>
<proteinExistence type="inferred from homology"/>
<dbReference type="EC" id="5.4.99.12" evidence="1"/>
<dbReference type="EMBL" id="AE002160">
    <property type="status" value="NOT_ANNOTATED_CDS"/>
    <property type="molecule type" value="Genomic_DNA"/>
</dbReference>
<dbReference type="PIR" id="D81669">
    <property type="entry name" value="D81669"/>
</dbReference>
<dbReference type="RefSeq" id="WP_010231435.1">
    <property type="nucleotide sequence ID" value="NZ_CP063055.1"/>
</dbReference>
<dbReference type="SMR" id="Q9PJT0"/>
<dbReference type="GeneID" id="23334630"/>
<dbReference type="OrthoDB" id="9811823at2"/>
<dbReference type="Proteomes" id="UP000000800">
    <property type="component" value="Chromosome"/>
</dbReference>
<dbReference type="GO" id="GO:0003723">
    <property type="term" value="F:RNA binding"/>
    <property type="evidence" value="ECO:0007669"/>
    <property type="project" value="InterPro"/>
</dbReference>
<dbReference type="GO" id="GO:0160147">
    <property type="term" value="F:tRNA pseudouridine(38-40) synthase activity"/>
    <property type="evidence" value="ECO:0007669"/>
    <property type="project" value="UniProtKB-EC"/>
</dbReference>
<dbReference type="GO" id="GO:0031119">
    <property type="term" value="P:tRNA pseudouridine synthesis"/>
    <property type="evidence" value="ECO:0007669"/>
    <property type="project" value="UniProtKB-UniRule"/>
</dbReference>
<dbReference type="CDD" id="cd02570">
    <property type="entry name" value="PseudoU_synth_EcTruA"/>
    <property type="match status" value="1"/>
</dbReference>
<dbReference type="FunFam" id="3.30.70.580:FF:000001">
    <property type="entry name" value="tRNA pseudouridine synthase A"/>
    <property type="match status" value="1"/>
</dbReference>
<dbReference type="Gene3D" id="3.30.70.660">
    <property type="entry name" value="Pseudouridine synthase I, catalytic domain, C-terminal subdomain"/>
    <property type="match status" value="1"/>
</dbReference>
<dbReference type="Gene3D" id="3.30.70.580">
    <property type="entry name" value="Pseudouridine synthase I, catalytic domain, N-terminal subdomain"/>
    <property type="match status" value="1"/>
</dbReference>
<dbReference type="HAMAP" id="MF_00171">
    <property type="entry name" value="TruA"/>
    <property type="match status" value="1"/>
</dbReference>
<dbReference type="InterPro" id="IPR020103">
    <property type="entry name" value="PsdUridine_synth_cat_dom_sf"/>
</dbReference>
<dbReference type="InterPro" id="IPR001406">
    <property type="entry name" value="PsdUridine_synth_TruA"/>
</dbReference>
<dbReference type="InterPro" id="IPR020097">
    <property type="entry name" value="PsdUridine_synth_TruA_a/b_dom"/>
</dbReference>
<dbReference type="InterPro" id="IPR020095">
    <property type="entry name" value="PsdUridine_synth_TruA_C"/>
</dbReference>
<dbReference type="InterPro" id="IPR020094">
    <property type="entry name" value="TruA/RsuA/RluB/E/F_N"/>
</dbReference>
<dbReference type="NCBIfam" id="TIGR00071">
    <property type="entry name" value="hisT_truA"/>
    <property type="match status" value="1"/>
</dbReference>
<dbReference type="PANTHER" id="PTHR11142">
    <property type="entry name" value="PSEUDOURIDYLATE SYNTHASE"/>
    <property type="match status" value="1"/>
</dbReference>
<dbReference type="PANTHER" id="PTHR11142:SF0">
    <property type="entry name" value="TRNA PSEUDOURIDINE SYNTHASE-LIKE 1"/>
    <property type="match status" value="1"/>
</dbReference>
<dbReference type="Pfam" id="PF01416">
    <property type="entry name" value="PseudoU_synth_1"/>
    <property type="match status" value="2"/>
</dbReference>
<dbReference type="PIRSF" id="PIRSF001430">
    <property type="entry name" value="tRNA_psdUrid_synth"/>
    <property type="match status" value="1"/>
</dbReference>
<dbReference type="SUPFAM" id="SSF55120">
    <property type="entry name" value="Pseudouridine synthase"/>
    <property type="match status" value="1"/>
</dbReference>
<keyword id="KW-0413">Isomerase</keyword>
<keyword id="KW-0819">tRNA processing</keyword>
<evidence type="ECO:0000255" key="1">
    <source>
        <dbReference type="HAMAP-Rule" id="MF_00171"/>
    </source>
</evidence>